<reference key="1">
    <citation type="journal article" date="2012" name="Environ. Microbiol.">
        <title>The genome sequence of Desulfatibacillum alkenivorans AK-01: a blueprint for anaerobic alkane oxidation.</title>
        <authorList>
            <person name="Callaghan A.V."/>
            <person name="Morris B.E."/>
            <person name="Pereira I.A."/>
            <person name="McInerney M.J."/>
            <person name="Austin R.N."/>
            <person name="Groves J.T."/>
            <person name="Kukor J.J."/>
            <person name="Suflita J.M."/>
            <person name="Young L.Y."/>
            <person name="Zylstra G.J."/>
            <person name="Wawrik B."/>
        </authorList>
    </citation>
    <scope>NUCLEOTIDE SEQUENCE [LARGE SCALE GENOMIC DNA]</scope>
    <source>
        <strain>AK-01</strain>
    </source>
</reference>
<dbReference type="EC" id="4.6.1.17" evidence="1"/>
<dbReference type="EMBL" id="CP001322">
    <property type="protein sequence ID" value="ACL05822.1"/>
    <property type="molecule type" value="Genomic_DNA"/>
</dbReference>
<dbReference type="RefSeq" id="WP_015948869.1">
    <property type="nucleotide sequence ID" value="NC_011768.1"/>
</dbReference>
<dbReference type="SMR" id="B8FMV2"/>
<dbReference type="KEGG" id="dal:Dalk_4138"/>
<dbReference type="eggNOG" id="COG0315">
    <property type="taxonomic scope" value="Bacteria"/>
</dbReference>
<dbReference type="HOGENOM" id="CLU_074693_1_1_7"/>
<dbReference type="UniPathway" id="UPA00344"/>
<dbReference type="Proteomes" id="UP000000739">
    <property type="component" value="Chromosome"/>
</dbReference>
<dbReference type="GO" id="GO:0061799">
    <property type="term" value="F:cyclic pyranopterin monophosphate synthase activity"/>
    <property type="evidence" value="ECO:0007669"/>
    <property type="project" value="UniProtKB-UniRule"/>
</dbReference>
<dbReference type="GO" id="GO:0006777">
    <property type="term" value="P:Mo-molybdopterin cofactor biosynthetic process"/>
    <property type="evidence" value="ECO:0007669"/>
    <property type="project" value="UniProtKB-UniRule"/>
</dbReference>
<dbReference type="CDD" id="cd01420">
    <property type="entry name" value="MoaC_PE"/>
    <property type="match status" value="1"/>
</dbReference>
<dbReference type="Gene3D" id="3.30.70.640">
    <property type="entry name" value="Molybdopterin cofactor biosynthesis C (MoaC) domain"/>
    <property type="match status" value="1"/>
</dbReference>
<dbReference type="HAMAP" id="MF_01224_B">
    <property type="entry name" value="MoaC_B"/>
    <property type="match status" value="1"/>
</dbReference>
<dbReference type="InterPro" id="IPR023045">
    <property type="entry name" value="MoaC"/>
</dbReference>
<dbReference type="InterPro" id="IPR047594">
    <property type="entry name" value="MoaC_bact/euk"/>
</dbReference>
<dbReference type="InterPro" id="IPR036522">
    <property type="entry name" value="MoaC_sf"/>
</dbReference>
<dbReference type="InterPro" id="IPR050105">
    <property type="entry name" value="MoCo_biosynth_MoaA/MoaC"/>
</dbReference>
<dbReference type="InterPro" id="IPR002820">
    <property type="entry name" value="Mopterin_CF_biosynth-C_dom"/>
</dbReference>
<dbReference type="NCBIfam" id="TIGR00581">
    <property type="entry name" value="moaC"/>
    <property type="match status" value="1"/>
</dbReference>
<dbReference type="NCBIfam" id="NF006870">
    <property type="entry name" value="PRK09364.1"/>
    <property type="match status" value="1"/>
</dbReference>
<dbReference type="PANTHER" id="PTHR22960:SF29">
    <property type="entry name" value="CYCLIC PYRANOPTERIN MONOPHOSPHATE SYNTHASE"/>
    <property type="match status" value="1"/>
</dbReference>
<dbReference type="PANTHER" id="PTHR22960">
    <property type="entry name" value="MOLYBDOPTERIN COFACTOR SYNTHESIS PROTEIN A"/>
    <property type="match status" value="1"/>
</dbReference>
<dbReference type="Pfam" id="PF01967">
    <property type="entry name" value="MoaC"/>
    <property type="match status" value="1"/>
</dbReference>
<dbReference type="SUPFAM" id="SSF55040">
    <property type="entry name" value="Molybdenum cofactor biosynthesis protein C, MoaC"/>
    <property type="match status" value="1"/>
</dbReference>
<proteinExistence type="inferred from homology"/>
<accession>B8FMV2</accession>
<name>MOAC_DESAL</name>
<evidence type="ECO:0000255" key="1">
    <source>
        <dbReference type="HAMAP-Rule" id="MF_01224"/>
    </source>
</evidence>
<protein>
    <recommendedName>
        <fullName evidence="1">Cyclic pyranopterin monophosphate synthase</fullName>
        <ecNumber evidence="1">4.6.1.17</ecNumber>
    </recommendedName>
    <alternativeName>
        <fullName evidence="1">Molybdenum cofactor biosynthesis protein C</fullName>
    </alternativeName>
</protein>
<comment type="function">
    <text evidence="1">Catalyzes the conversion of (8S)-3',8-cyclo-7,8-dihydroguanosine 5'-triphosphate to cyclic pyranopterin monophosphate (cPMP).</text>
</comment>
<comment type="catalytic activity">
    <reaction evidence="1">
        <text>(8S)-3',8-cyclo-7,8-dihydroguanosine 5'-triphosphate = cyclic pyranopterin phosphate + diphosphate</text>
        <dbReference type="Rhea" id="RHEA:49580"/>
        <dbReference type="ChEBI" id="CHEBI:33019"/>
        <dbReference type="ChEBI" id="CHEBI:59648"/>
        <dbReference type="ChEBI" id="CHEBI:131766"/>
        <dbReference type="EC" id="4.6.1.17"/>
    </reaction>
</comment>
<comment type="pathway">
    <text evidence="1">Cofactor biosynthesis; molybdopterin biosynthesis.</text>
</comment>
<comment type="subunit">
    <text evidence="1">Homohexamer; trimer of dimers.</text>
</comment>
<comment type="similarity">
    <text evidence="1">Belongs to the MoaC family.</text>
</comment>
<gene>
    <name evidence="1" type="primary">moaC</name>
    <name type="ordered locus">Dalk_4138</name>
</gene>
<sequence>MADFSHLDEKGRVQMVDVSDKKTTDRLAIAVGKLSMKPDTLASILDQAMPKGNVLETARIAGIMAAKKTWELIPMCHPLELTHVQVDFFPETETSSIRIEGQARVAGRTGVEMEALTAVSVAALTIYDMCKSADKAMAIEKIHLVRKYGGKSGEFVNEG</sequence>
<keyword id="KW-0456">Lyase</keyword>
<keyword id="KW-0501">Molybdenum cofactor biosynthesis</keyword>
<keyword id="KW-1185">Reference proteome</keyword>
<organism>
    <name type="scientific">Desulfatibacillum aliphaticivorans</name>
    <dbReference type="NCBI Taxonomy" id="218208"/>
    <lineage>
        <taxon>Bacteria</taxon>
        <taxon>Pseudomonadati</taxon>
        <taxon>Thermodesulfobacteriota</taxon>
        <taxon>Desulfobacteria</taxon>
        <taxon>Desulfobacterales</taxon>
        <taxon>Desulfatibacillaceae</taxon>
        <taxon>Desulfatibacillum</taxon>
    </lineage>
</organism>
<feature type="chain" id="PRO_1000164884" description="Cyclic pyranopterin monophosphate synthase">
    <location>
        <begin position="1"/>
        <end position="159"/>
    </location>
</feature>
<feature type="active site" evidence="1">
    <location>
        <position position="128"/>
    </location>
</feature>
<feature type="binding site" evidence="1">
    <location>
        <begin position="75"/>
        <end position="77"/>
    </location>
    <ligand>
        <name>substrate</name>
    </ligand>
</feature>
<feature type="binding site" evidence="1">
    <location>
        <begin position="113"/>
        <end position="114"/>
    </location>
    <ligand>
        <name>substrate</name>
    </ligand>
</feature>